<evidence type="ECO:0000250" key="1"/>
<evidence type="ECO:0000255" key="2"/>
<evidence type="ECO:0000305" key="3"/>
<dbReference type="EMBL" id="GU292883">
    <property type="protein sequence ID" value="ADB56699.1"/>
    <property type="molecule type" value="mRNA"/>
</dbReference>
<dbReference type="EMBL" id="GU293064">
    <property type="protein sequence ID" value="ADB56880.1"/>
    <property type="molecule type" value="Genomic_DNA"/>
</dbReference>
<dbReference type="SMR" id="D2Y206"/>
<dbReference type="ArachnoServer" id="AS001783">
    <property type="toxin name" value="U4-theraphotoxin-Hhn1a"/>
</dbReference>
<dbReference type="GO" id="GO:0005576">
    <property type="term" value="C:extracellular region"/>
    <property type="evidence" value="ECO:0007669"/>
    <property type="project" value="UniProtKB-SubCell"/>
</dbReference>
<dbReference type="GO" id="GO:0035792">
    <property type="term" value="C:host cell postsynaptic membrane"/>
    <property type="evidence" value="ECO:0007669"/>
    <property type="project" value="UniProtKB-KW"/>
</dbReference>
<dbReference type="GO" id="GO:0090729">
    <property type="term" value="F:toxin activity"/>
    <property type="evidence" value="ECO:0007669"/>
    <property type="project" value="UniProtKB-KW"/>
</dbReference>
<dbReference type="InterPro" id="IPR012625">
    <property type="entry name" value="Hwtx-2-like"/>
</dbReference>
<dbReference type="Pfam" id="PF08089">
    <property type="entry name" value="Toxin_20"/>
    <property type="match status" value="1"/>
</dbReference>
<dbReference type="SUPFAM" id="SSF57059">
    <property type="entry name" value="omega toxin-like"/>
    <property type="match status" value="1"/>
</dbReference>
<dbReference type="PROSITE" id="PS60022">
    <property type="entry name" value="HWTX_2"/>
    <property type="match status" value="1"/>
</dbReference>
<comment type="function">
    <text evidence="1">Postsynaptic neurotoxin.</text>
</comment>
<comment type="subcellular location">
    <subcellularLocation>
        <location>Secreted</location>
    </subcellularLocation>
</comment>
<comment type="tissue specificity">
    <text>Expressed by the venom gland.</text>
</comment>
<comment type="similarity">
    <text evidence="3">Belongs to the neurotoxin 12 (Hwtx-2) family. 02 (Hwtx-2) subfamily.</text>
</comment>
<organism>
    <name type="scientific">Cyriopagopus hainanus</name>
    <name type="common">Chinese bird spider</name>
    <name type="synonym">Haplopelma hainanum</name>
    <dbReference type="NCBI Taxonomy" id="209901"/>
    <lineage>
        <taxon>Eukaryota</taxon>
        <taxon>Metazoa</taxon>
        <taxon>Ecdysozoa</taxon>
        <taxon>Arthropoda</taxon>
        <taxon>Chelicerata</taxon>
        <taxon>Arachnida</taxon>
        <taxon>Araneae</taxon>
        <taxon>Mygalomorphae</taxon>
        <taxon>Theraphosidae</taxon>
        <taxon>Haplopelma</taxon>
    </lineage>
</organism>
<sequence>MKVTLIAILTCAAVLVLHTTAAEELEESQLMEVGMPDTELAAVDEERLFECSVSCEIEKEGNKDCKKKKCKGGWKCKFNMCVKV</sequence>
<name>H2A15_CYRHA</name>
<feature type="signal peptide" evidence="2">
    <location>
        <begin position="1"/>
        <end position="22"/>
    </location>
</feature>
<feature type="propeptide" id="PRO_0000400745">
    <location>
        <begin position="23"/>
        <end position="47"/>
    </location>
</feature>
<feature type="peptide" id="PRO_0000400746" description="U4-theraphotoxin-Hhn1a">
    <location>
        <begin position="48"/>
        <end position="84"/>
    </location>
</feature>
<feature type="disulfide bond" evidence="1">
    <location>
        <begin position="51"/>
        <end position="65"/>
    </location>
</feature>
<feature type="disulfide bond" evidence="1">
    <location>
        <begin position="55"/>
        <end position="76"/>
    </location>
</feature>
<feature type="disulfide bond" evidence="1">
    <location>
        <begin position="70"/>
        <end position="81"/>
    </location>
</feature>
<accession>D2Y206</accession>
<proteinExistence type="evidence at protein level"/>
<reference key="1">
    <citation type="journal article" date="2010" name="J. Proteome Res.">
        <title>Molecular diversification of peptide toxins from the tarantula Haplopelma hainanum (Ornithoctonus hainana) venom based on transcriptomic, peptidomic, and genomic analyses.</title>
        <authorList>
            <person name="Tang X."/>
            <person name="Zhang Y."/>
            <person name="Hu W."/>
            <person name="Xu D."/>
            <person name="Tao H."/>
            <person name="Yang X."/>
            <person name="Li Y."/>
            <person name="Jiang L."/>
            <person name="Liang S."/>
        </authorList>
    </citation>
    <scope>NUCLEOTIDE SEQUENCE [LARGE SCALE GENOMIC DNA / MRNA]</scope>
    <scope>PROTEIN SEQUENCE OF 49-85</scope>
    <scope>IDENTIFICATION BY MASS SPECTROMETRY</scope>
    <source>
        <tissue>Venom</tissue>
        <tissue>Venom gland</tissue>
    </source>
</reference>
<keyword id="KW-0903">Direct protein sequencing</keyword>
<keyword id="KW-1015">Disulfide bond</keyword>
<keyword id="KW-0528">Neurotoxin</keyword>
<keyword id="KW-0629">Postsynaptic neurotoxin</keyword>
<keyword id="KW-0964">Secreted</keyword>
<keyword id="KW-0732">Signal</keyword>
<keyword id="KW-0800">Toxin</keyword>
<protein>
    <recommendedName>
        <fullName>U4-theraphotoxin-Hhn1a</fullName>
        <shortName>U4-TRTX-Hhn1a</shortName>
    </recommendedName>
    <alternativeName>
        <fullName>Hainantoxin-II.15</fullName>
        <shortName>HNTX-II.15</shortName>
    </alternativeName>
    <alternativeName>
        <fullName>Peptide F8-20.15</fullName>
    </alternativeName>
</protein>